<organism>
    <name type="scientific">Hepatitis C virus (isolate Glasgow)</name>
    <name type="common">HCV</name>
    <dbReference type="NCBI Taxonomy" id="329389"/>
    <lineage>
        <taxon>Viruses</taxon>
        <taxon>Riboviria</taxon>
        <taxon>Orthornavirae</taxon>
        <taxon>Kitrinoviricota</taxon>
        <taxon>Flasuviricetes</taxon>
        <taxon>Amarillovirales</taxon>
        <taxon>Flaviviridae</taxon>
        <taxon>Hepacivirus</taxon>
        <taxon>Hepacivirus hominis</taxon>
    </lineage>
</organism>
<reference key="1">
    <citation type="journal article" date="1999" name="J. Gen. Virol.">
        <title>Covalent interactions are not required to permit or stabilize the non-covalent association of hepatitis C virus glycoproteins E1 and E2.</title>
        <authorList>
            <person name="Patel J."/>
            <person name="Patel A.H."/>
            <person name="McLauchlan J."/>
        </authorList>
    </citation>
    <scope>NUCLEOTIDE SEQUENCE [GENOMIC RNA]</scope>
</reference>
<reference key="2">
    <citation type="journal article" date="1999" name="Virology">
        <title>Hepatitis C virus core protein interacts with a human DEAD box protein DDX3.</title>
        <authorList>
            <person name="Owsianka A.M."/>
            <person name="Patel A.H."/>
        </authorList>
    </citation>
    <scope>INTERACTION WITH HOST DDX3X (MATURE CORE PROTEIN)</scope>
</reference>
<reference key="3">
    <citation type="journal article" date="2002" name="EMBO J.">
        <title>Intramembrane proteolysis promotes trafficking of hepatitis C virus core protein to lipid droplets.</title>
        <authorList>
            <person name="McLauchlan J."/>
            <person name="Lemberg M.K."/>
            <person name="Hope G."/>
            <person name="Martoglio B."/>
        </authorList>
    </citation>
    <scope>CLEAVAGE BY THE SIGNAL PEPTIDASE (CORE PROTEIN P21)</scope>
    <scope>SUBCELLULAR LOCATION</scope>
    <scope>MUTAGENESIS OF 180-ALA--CYS-184</scope>
</reference>
<reference key="4">
    <citation type="journal article" date="2000" name="J. Viral Hepat.">
        <title>Properties of the hepatitis C virus core protein: a structural protein that modulates cellular processes.</title>
        <authorList>
            <person name="McLauchlan J."/>
        </authorList>
    </citation>
    <scope>REVIEW</scope>
</reference>
<reference key="5">
    <citation type="journal article" date="2004" name="Hepatology">
        <title>Structural biology of hepatitis C virus.</title>
        <authorList>
            <person name="Penin F."/>
            <person name="Dubuisson J."/>
            <person name="Rey F.A."/>
            <person name="Moradpour D."/>
            <person name="Pawlotsky J.-M."/>
        </authorList>
    </citation>
    <scope>REVIEW</scope>
    <scope>SUBCELLULAR LOCATION</scope>
</reference>
<dbReference type="EC" id="3.4.22.-" evidence="4"/>
<dbReference type="EMBL" id="AY885238">
    <property type="protein sequence ID" value="AAW78019.1"/>
    <property type="molecule type" value="Genomic_RNA"/>
</dbReference>
<dbReference type="PDB" id="4GAG">
    <property type="method" value="X-ray"/>
    <property type="resolution" value="1.80 A"/>
    <property type="chains" value="P=412-423"/>
</dbReference>
<dbReference type="PDB" id="5VXR">
    <property type="method" value="X-ray"/>
    <property type="resolution" value="1.40 A"/>
    <property type="chains" value="P=412-423"/>
</dbReference>
<dbReference type="PDBsum" id="4GAG"/>
<dbReference type="PDBsum" id="5VXR"/>
<dbReference type="SMR" id="Q5EG65"/>
<dbReference type="IntAct" id="Q5EG65">
    <property type="interactions" value="1"/>
</dbReference>
<dbReference type="ABCD" id="Q5EG65">
    <property type="antibodies" value="1 sequenced antibody"/>
</dbReference>
<dbReference type="euHCVdb" id="AY885238"/>
<dbReference type="EvolutionaryTrace" id="Q5EG65"/>
<dbReference type="GO" id="GO:0044167">
    <property type="term" value="C:host cell endoplasmic reticulum membrane"/>
    <property type="evidence" value="ECO:0007669"/>
    <property type="project" value="UniProtKB-SubCell"/>
</dbReference>
<dbReference type="GO" id="GO:0044186">
    <property type="term" value="C:host cell lipid droplet"/>
    <property type="evidence" value="ECO:0007669"/>
    <property type="project" value="UniProtKB-SubCell"/>
</dbReference>
<dbReference type="GO" id="GO:0044191">
    <property type="term" value="C:host cell mitochondrial membrane"/>
    <property type="evidence" value="ECO:0007669"/>
    <property type="project" value="UniProtKB-SubCell"/>
</dbReference>
<dbReference type="GO" id="GO:0042025">
    <property type="term" value="C:host cell nucleus"/>
    <property type="evidence" value="ECO:0007669"/>
    <property type="project" value="UniProtKB-SubCell"/>
</dbReference>
<dbReference type="GO" id="GO:0020002">
    <property type="term" value="C:host cell plasma membrane"/>
    <property type="evidence" value="ECO:0007669"/>
    <property type="project" value="UniProtKB-SubCell"/>
</dbReference>
<dbReference type="GO" id="GO:0016020">
    <property type="term" value="C:membrane"/>
    <property type="evidence" value="ECO:0007669"/>
    <property type="project" value="UniProtKB-KW"/>
</dbReference>
<dbReference type="GO" id="GO:1990904">
    <property type="term" value="C:ribonucleoprotein complex"/>
    <property type="evidence" value="ECO:0007669"/>
    <property type="project" value="UniProtKB-KW"/>
</dbReference>
<dbReference type="GO" id="GO:0019031">
    <property type="term" value="C:viral envelope"/>
    <property type="evidence" value="ECO:0007669"/>
    <property type="project" value="UniProtKB-KW"/>
</dbReference>
<dbReference type="GO" id="GO:0019013">
    <property type="term" value="C:viral nucleocapsid"/>
    <property type="evidence" value="ECO:0007669"/>
    <property type="project" value="UniProtKB-KW"/>
</dbReference>
<dbReference type="GO" id="GO:0055036">
    <property type="term" value="C:virion membrane"/>
    <property type="evidence" value="ECO:0007669"/>
    <property type="project" value="UniProtKB-SubCell"/>
</dbReference>
<dbReference type="GO" id="GO:0015267">
    <property type="term" value="F:channel activity"/>
    <property type="evidence" value="ECO:0007669"/>
    <property type="project" value="UniProtKB-KW"/>
</dbReference>
<dbReference type="GO" id="GO:0008234">
    <property type="term" value="F:cysteine-type peptidase activity"/>
    <property type="evidence" value="ECO:0007669"/>
    <property type="project" value="UniProtKB-KW"/>
</dbReference>
<dbReference type="GO" id="GO:0003723">
    <property type="term" value="F:RNA binding"/>
    <property type="evidence" value="ECO:0007669"/>
    <property type="project" value="UniProtKB-KW"/>
</dbReference>
<dbReference type="GO" id="GO:0005198">
    <property type="term" value="F:structural molecule activity"/>
    <property type="evidence" value="ECO:0007669"/>
    <property type="project" value="InterPro"/>
</dbReference>
<dbReference type="GO" id="GO:0075512">
    <property type="term" value="P:clathrin-dependent endocytosis of virus by host cell"/>
    <property type="evidence" value="ECO:0007669"/>
    <property type="project" value="UniProtKB-KW"/>
</dbReference>
<dbReference type="GO" id="GO:0039654">
    <property type="term" value="P:fusion of virus membrane with host endosome membrane"/>
    <property type="evidence" value="ECO:0007669"/>
    <property type="project" value="UniProtKB-KW"/>
</dbReference>
<dbReference type="GO" id="GO:0034220">
    <property type="term" value="P:monoatomic ion transmembrane transport"/>
    <property type="evidence" value="ECO:0007669"/>
    <property type="project" value="UniProtKB-KW"/>
</dbReference>
<dbReference type="GO" id="GO:0006508">
    <property type="term" value="P:proteolysis"/>
    <property type="evidence" value="ECO:0007669"/>
    <property type="project" value="UniProtKB-KW"/>
</dbReference>
<dbReference type="GO" id="GO:0052170">
    <property type="term" value="P:symbiont-mediated suppression of host innate immune response"/>
    <property type="evidence" value="ECO:0007669"/>
    <property type="project" value="UniProtKB-KW"/>
</dbReference>
<dbReference type="GO" id="GO:0019062">
    <property type="term" value="P:virion attachment to host cell"/>
    <property type="evidence" value="ECO:0007669"/>
    <property type="project" value="UniProtKB-KW"/>
</dbReference>
<dbReference type="CDD" id="cd20903">
    <property type="entry name" value="HCV_p7"/>
    <property type="match status" value="1"/>
</dbReference>
<dbReference type="FunFam" id="3.30.160.890:FF:000001">
    <property type="entry name" value="Genome polyprotein"/>
    <property type="match status" value="1"/>
</dbReference>
<dbReference type="FunFam" id="4.10.710.10:FF:000001">
    <property type="entry name" value="Genome polyprotein"/>
    <property type="match status" value="1"/>
</dbReference>
<dbReference type="Gene3D" id="6.10.250.1750">
    <property type="match status" value="1"/>
</dbReference>
<dbReference type="Gene3D" id="4.10.710.10">
    <property type="entry name" value="Hepatitis C Virus Capsid Protein, Chain A"/>
    <property type="match status" value="1"/>
</dbReference>
<dbReference type="Gene3D" id="3.30.160.890">
    <property type="entry name" value="Hepatitis C virus envelope glycoprotein E1, chain C"/>
    <property type="match status" value="1"/>
</dbReference>
<dbReference type="InterPro" id="IPR002521">
    <property type="entry name" value="HCV_Core_C"/>
</dbReference>
<dbReference type="InterPro" id="IPR044896">
    <property type="entry name" value="HCV_core_chain_A"/>
</dbReference>
<dbReference type="InterPro" id="IPR002522">
    <property type="entry name" value="HCV_core_N"/>
</dbReference>
<dbReference type="InterPro" id="IPR002519">
    <property type="entry name" value="HCV_Env"/>
</dbReference>
<dbReference type="InterPro" id="IPR002531">
    <property type="entry name" value="HCV_NS1"/>
</dbReference>
<dbReference type="InterPro" id="IPR049913">
    <property type="entry name" value="HCV_p7"/>
</dbReference>
<dbReference type="Pfam" id="PF01543">
    <property type="entry name" value="HCV_capsid"/>
    <property type="match status" value="1"/>
</dbReference>
<dbReference type="Pfam" id="PF01542">
    <property type="entry name" value="HCV_core"/>
    <property type="match status" value="1"/>
</dbReference>
<dbReference type="Pfam" id="PF01539">
    <property type="entry name" value="HCV_env"/>
    <property type="match status" value="1"/>
</dbReference>
<dbReference type="Pfam" id="PF01560">
    <property type="entry name" value="HCV_NS1"/>
    <property type="match status" value="1"/>
</dbReference>
<comment type="function">
    <molecule>Mature core protein</molecule>
    <text evidence="3 5 6 7 11 17">Packages viral RNA to form a viral nucleocapsid, and promotes virion budding (Probable). Participates in the viral particle production as a result of its interaction with the non-structural protein 5A (By similarity). Binds RNA and may function as a RNA chaperone to induce the RNA structural rearrangements taking place during virus replication (By similarity). Modulates viral translation initiation by interacting with viral IRES and 40S ribosomal subunit (By similarity). Affects various cell signaling pathways, host immunity and lipid metabolism (Probable). Prevents the establishment of cellular antiviral state by blocking the interferon-alpha/beta (IFN-alpha/beta) and IFN-gamma signaling pathways and by blocking the formation of phosphorylated STAT1 and promoting ubiquitin-mediated proteasome-dependent degradation of STAT1 (By similarity). Activates STAT3 leading to cellular transformation (By similarity). Regulates the activity of cellular genes, including c-myc and c-fos (By similarity). May repress the promoter of p53, and sequester CREB3 and SP110 isoform 3/Sp110b in the cytoplasm (By similarity). Represses cell cycle negative regulating factor CDKN1A, thereby interrupting an important check point of normal cell cycle regulation (By similarity). Targets transcription factors involved in the regulation of inflammatory responses and in the immune response: suppresses TNF-induced NF-kappa-B activation, and activates AP-1 (By similarity). Binds to dendritic cells (DCs) via C1QR1, resulting in down-regulation of T-lymphocytes proliferation (By similarity). Alters lipid metabolism by interacting with hepatocellular proteins involved in lipid accumulation and storage (By similarity). Induces up-regulation of FAS promoter activity, and thereby contributes to the increased triglyceride accumulation in hepatocytes (steatosis) (By similarity).</text>
</comment>
<comment type="function">
    <molecule>Envelope glycoprotein E1</molecule>
    <text evidence="6">Forms a heterodimer with envelope glycoprotein E2, which mediates virus attachment to the host cell, virion internalization through clathrin-dependent endocytosis and fusion with host membrane (By similarity). Fusion with the host cell is most likely mediated by both E1 and E2, through conformational rearrangements of the heterodimer required for fusion rather than a classical class II fusion mechanism (By similarity). E1/E2 heterodimer binds host apolipoproteins such as APOB and ApoE thereby forming a lipo-viro-particle (LVP) (By similarity). APOE associated to the LVP allows the initial virus attachment to cell surface receptors such as the heparan sulfate proteoglycans (HSPGs), syndecan-1 (SDC1), syndecan-1 (SDC2), the low-density lipoprotein receptor (LDLR) and scavenger receptor class B type I (SCARB1) (By similarity). The cholesterol transfer activity of SCARB1 allows E2 exposure and binding of E2 to SCARB1 and the tetraspanin CD81 (By similarity). E1/E2 heterodimer binding on CD81 activates the epithelial growth factor receptor (EGFR) signaling pathway (By similarity). Diffusion of the complex E1-E2-EGFR-SCARB1-CD81 to the cell lateral membrane allows further interaction with Claudin 1 (CLDN1) and occludin (OCLN) to finally trigger HCV entry (By similarity).</text>
</comment>
<comment type="function">
    <molecule>Envelope glycoprotein E2</molecule>
    <text evidence="5 6">Forms a heterodimer with envelope glycoprotein E1, which mediates virus attachment to the host cell, virion internalization through clathrin-dependent endocytosis and fusion with host membrane (By similarity). Fusion with the host cell is most likely mediated by both E1 and E2, through conformational rearrangements of the heterodimer required for fusion rather than a classical class II fusion mechanism (By similarity). The interaction between envelope glycoprotein E2 and host apolipoprotein E/APOE allows the proper assembly, maturation and infectivity of the viral particles (By similarity). This interaction is probably promoted via the up-regulation of cellular autophagy by the virus (By similarity). E1/E2 heterodimer binds host apolipoproteins such as APOB and APOE thereby forming a lipo-viro-particle (LVP) (By similarity). APOE associated to the LVP allows the initial virus attachment to cell surface receptors such as the heparan sulfate proteoglycans (HSPGs), syndecan-1 (SDC1), syndecan-1 (SDC2), the low-density lipoprotein receptor (LDLR) and scavenger receptor class B type I (SCARB1) (By similarity). The cholesterol transfer activity of SCARB1 allows E2 exposure and binding of E2 to SCARB1 and the tetraspanin CD81 (By similarity). E1/E2 heterodimer binding on CD81 activates the epithelial growth factor receptor (EGFR) signaling pathway (By similarity). Diffusion of the complex E1-E2-EGFR-SCARB1-CD81 to the cell lateral membrane allows further interaction with Claudin 1 (CLDN1) and occludin (OCLN) to finally trigger HCV entry (By similarity). Inhibits host EIF2AK2/PKR activation, preventing the establishment of an antiviral state (By similarity). Viral ligand for CD209/DC-SIGN and CLEC4M/DC-SIGNR, which are respectively found on dendritic cells (DCs), and on liver sinusoidal endothelial cells and macrophage-like cells of lymph node sinuses (By similarity). These interactions allow the capture of circulating HCV particles by these cells and subsequent facilitated transmission to permissive cells such as hepatocytes and lymphocyte subpopulations (By similarity).</text>
</comment>
<comment type="function">
    <molecule>Viroporin p7</molecule>
    <text evidence="6 11 17">Ion channel protein that acts as a viroporin and plays an essential role in the assembly, envelopment and secretion of viral particles (By similarity). Regulates the host cell secretory pathway, which induces the intracellular retention of viral glycoproteins and favors assembly of viral particles (By similarity). Creates a pore in acidic organelles and releases Ca(2+) and H(+) in the cytoplasm of infected cells, leading to a productive viral infection (By similarity). High levels of cytoplasmic Ca(2+) may trigger membrane trafficking and transport of viral ER-associated proteins to viroplasms, sites of viral genome replication (Probable). This ionic imbalance induces the assembly of the inflammasome complex, which triggers the maturation of pro-IL-1beta into IL-1beta through the action of caspase-1 (By similarity). Targets also host mitochondria and induces mitochondrial depolarization (By similarity). In addition of its role as a viroporin, acts as a lipid raft adhesion factor (By similarity).</text>
</comment>
<comment type="function">
    <molecule>Protease NS2</molecule>
    <text evidence="4 6">Cysteine protease required for the proteolytic auto-cleavage between the non-structural proteins NS2 and NS3 (By similarity). The N-terminus of NS3 is required for the function of NS2 protease (active region NS2-3) (By similarity). Promotes the initiation of viral particle assembly by mediating the interaction between structural and non-structural proteins (By similarity).</text>
</comment>
<comment type="cofactor">
    <molecule>Protease NS2</molecule>
    <cofactor evidence="4">
        <name>Zn(2+)</name>
        <dbReference type="ChEBI" id="CHEBI:29105"/>
    </cofactor>
    <text evidence="4">Activity of protease NS2 is dependent on zinc ions and completely inhibited by EDTA. This is probably due to the fact that NS2 protease activity needs NS3 N-terminus that binds a zinc atom (active region NS2-3).</text>
</comment>
<comment type="activity regulation">
    <molecule>Viroporin p7</molecule>
    <text evidence="3 6">Inhibited by the antiviral drug hexamethylene amiloride (By similarity). Inhibition by amantadine appears to be genotype-dependent (By similarity). Also inhibited by long-alkyl-chain iminosugar derivatives (By similarity).</text>
</comment>
<comment type="subunit">
    <molecule>Mature core protein</molecule>
    <text evidence="3 5 6 7 9 11 15">Homooligomer (By similarity). Interacts with E1 (via C-terminus) (By similarity). Interacts with the non-structural protein 5A (By similarity). Interacts (via N-terminus) with host STAT1 (via SH2 domain); this interaction results in decreased STAT1 phosphorylation and ubiquitin-mediated proteasome-dependent STAT1 degradation, leading to decreased IFN-stimulated gene transcription (By similarity). Interacts with host STAT3; this interaction constitutively activates STAT3 (By similarity). Interacts with host LTBR receptor (By similarity). Interacts with host TNFRSF1A receptor and possibly induces apoptosis (By similarity). Interacts with host HNRPK (By similarity). Interacts with host YWHAE (By similarity). Interacts with host UBE3A/E6AP (By similarity). Interacts with host DDX3X (PubMed:10329544). Interacts with host APOA2 (By similarity). Interacts with host RXRA protein (By similarity). Interacts with host SP110 isoform 3/Sp110b; this interaction sequesters the transcriptional corepressor SP110 away from the nucleus (By similarity). Interacts with host CREB3 nuclear transcription protein; this interaction triggers cell transformation (By similarity). Interacts with host ACY3 (By similarity). Interacts with host C1QR1 (By similarity). Interacts with host RBM24; this interaction, which enhances the interaction of the mature core protein with 5'-UTR, may inhibit viral translation and favor replication (By similarity). Interacts with host EIF2AK2/PKR; this interaction induces the autophosphorylation of EIF2AK2 (By similarity). Part of the viral assembly initiation complex composed of NS2, E1, E2, NS3, NS4A, NS5A and the mature core protein (By similarity).</text>
</comment>
<comment type="subunit">
    <molecule>Envelope glycoprotein E1</molecule>
    <text evidence="6 11">Forms a heterodimer with envelope glycoprotein E2 (By similarity). Interacts with mature core protein (By similarity). Interacts with protease NS2 (By similarity). The heterodimer E1/E2 interacts with host CLDN1; this interaction plays a role in viral entry into host cell (By similarity). Interacts with host SPSB2 (via C-terminus) (By similarity). Part of the viral assembly initiation complex composed of NS2, E1, E2, NS3, NS4A, NS5A and the mature core protein (By similarity).</text>
</comment>
<comment type="subunit">
    <molecule>Envelope glycoprotein E2</molecule>
    <text evidence="6 11">Forms a heterodimer with envelope glycoprotein E1 (By similarity). Interacts with host CD81 and SCARB1 receptors; these interactions play a role in viral entry into host cell (By similarity). Interacts with host EIF2AK2/PKR; this interaction inhibits EIF2AK2 and probably allows the virus to evade the innate immune response (By similarity). Interacts with host CD209/DC-SIGN and CLEC4M/DC-SIGNR (By similarity). Interact with host SPCS1; this interaction is essential for viral particle assembly (By similarity). Interacts with protease NS2 (By similarity). The heterodimer E1/E2 interacts with host CLDN1; this interaction plays a role in viral entry into host cell (By similarity). Part of the viral assembly initiation complex composed of NS2, E1, E2, NS3, NS4A, NS5A and the mature core protein (By similarity).</text>
</comment>
<comment type="subunit">
    <molecule>Viroporin p7</molecule>
    <text evidence="2 6 11">Homohexamer (By similarity). Homoheptamer (By similarity). Interacts with protease NS2 (By similarity).</text>
</comment>
<comment type="subunit">
    <molecule>Protease NS2</molecule>
    <text evidence="6 11">Homodimer (By similarity). Interacts with host SPCS1; this interaction is essential for viral particle assembly (By similarity). Interacts with envelope glycoprotein E1 (By similarity). Interacts with envelope glycoprotein E2 (By similarity). Interacts with viroporin p7 (By similarity). Interacts with serine protease/helicase NS3 (By similarity). Part of the replication complex composed of NS2, NS3, NS4A, NS4B, NS5A and the RNA-directed RNA polymerase embedded in an ER-derived membranous web (By similarity). Part of the viral assembly initiation complex composed of NS2, E1, E2, NS3, NS4A, NS5A and the mature core protein (By similarity).</text>
</comment>
<comment type="interaction">
    <interactant intactId="EBI-9254385">
        <id>PRO_0000037559</id>
    </interactant>
    <interactant intactId="EBI-353779">
        <id>O00571</id>
        <label>DDX3X</label>
    </interactant>
    <organismsDiffer>true</organismsDiffer>
    <experiments>4</experiments>
</comment>
<comment type="subcellular location">
    <molecule>Core protein precursor</molecule>
    <subcellularLocation>
        <location evidence="5">Host endoplasmic reticulum membrane</location>
        <topology evidence="13">Single-pass membrane protein</topology>
    </subcellularLocation>
    <subcellularLocation>
        <location evidence="5">Host mitochondrion membrane</location>
        <topology evidence="13">Single-pass type I membrane protein</topology>
    </subcellularLocation>
    <text>The C-terminal transmembrane domain of the core protein precursor contains an ER signal leading the nascent polyprotein to the ER membrane.</text>
</comment>
<comment type="subcellular location">
    <molecule>Mature core protein</molecule>
    <subcellularLocation>
        <location evidence="11">Virion</location>
    </subcellularLocation>
    <subcellularLocation>
        <location evidence="11">Host cytoplasm</location>
    </subcellularLocation>
    <subcellularLocation>
        <location evidence="3">Host nucleus</location>
    </subcellularLocation>
    <subcellularLocation>
        <location evidence="11">Host lipid droplet</location>
    </subcellularLocation>
    <text evidence="6">Only a minor proportion of core protein is present in the nucleus (By similarity). Probably present on the surface of lipid droplets (By similarity).</text>
</comment>
<comment type="subcellular location">
    <molecule>Envelope glycoprotein E1</molecule>
    <subcellularLocation>
        <location evidence="17">Virion membrane</location>
        <topology evidence="17">Single-pass type I membrane protein</topology>
    </subcellularLocation>
    <subcellularLocation>
        <location>Host endoplasmic reticulum membrane</location>
        <topology evidence="6">Single-pass type I membrane protein</topology>
    </subcellularLocation>
    <text evidence="6">The C-terminal transmembrane domain acts as a signal sequence and forms a hairpin structure before cleavage by host signal peptidase (By similarity). After cleavage, the membrane sequence is retained at the C-terminus of the protein, serving as ER membrane anchor (By similarity). A reorientation of the second hydrophobic stretch occurs after cleavage producing a single reoriented transmembrane domain (By similarity). These events explain the final topology of the protein (By similarity).</text>
</comment>
<comment type="subcellular location">
    <molecule>Envelope glycoprotein E2</molecule>
    <subcellularLocation>
        <location evidence="17">Virion membrane</location>
        <topology evidence="17">Single-pass type I membrane protein</topology>
    </subcellularLocation>
    <subcellularLocation>
        <location>Host endoplasmic reticulum membrane</location>
        <topology evidence="6">Single-pass type I membrane protein</topology>
    </subcellularLocation>
    <subcellularLocation>
        <location evidence="12">Host lipid droplet</location>
    </subcellularLocation>
    <text evidence="6">The C-terminal transmembrane domain acts as a signal sequence and forms a hairpin structure before cleavage by host signal peptidase (By similarity). After cleavage, the membrane sequence is retained at the C-terminus of the protein, serving as ER membrane anchor (By similarity). A reorientation of the second hydrophobic stretch occurs after cleavage producing a single reoriented transmembrane domain (By similarity). These events explain the final topology of the protein (By similarity).</text>
</comment>
<comment type="subcellular location">
    <molecule>Viroporin p7</molecule>
    <subcellularLocation>
        <location evidence="6">Host endoplasmic reticulum membrane</location>
        <topology evidence="6">Multi-pass membrane protein</topology>
    </subcellularLocation>
    <subcellularLocation>
        <location evidence="6">Host mitochondrion</location>
    </subcellularLocation>
    <subcellularLocation>
        <location evidence="6">Host cell membrane</location>
    </subcellularLocation>
    <text evidence="6">The C-terminus of p7 membrane domain acts as a signal sequence (By similarity). After cleavage by host signal peptidase, the membrane sequence is retained at the C-terminus of the protein, serving as ER membrane anchor (By similarity). ER retention of p7 is leaky and a small fraction reaches the plasma membrane (By similarity).</text>
</comment>
<comment type="subcellular location">
    <molecule>Protease NS2</molecule>
    <subcellularLocation>
        <location evidence="6">Host endoplasmic reticulum membrane</location>
        <topology evidence="6">Multi-pass membrane protein</topology>
    </subcellularLocation>
    <subcellularLocation>
        <location evidence="12">Host lipid droplet</location>
    </subcellularLocation>
    <text evidence="11">Probably present on the surface of lipid droplets.</text>
</comment>
<comment type="domain">
    <molecule>Envelope glycoprotein E1</molecule>
    <text evidence="6">The transmembrane regions of envelope E1 and E2 glycoproteins are involved in heterodimer formation, ER localization, and assembly of these proteins.</text>
</comment>
<comment type="domain">
    <molecule>Envelope glycoprotein E2</molecule>
    <text evidence="4 6">The transmembrane regions of envelope E1 and E2 glycoproteins are involved in heterodimer formation, ER localization, and assembly of these proteins (By similarity). Envelope E2 glycoprotein contain two highly variable regions called hypervariable region 1 and 2 (HVR1 and HVR2) (By similarity). E2 also contain two segments involved in CD81-binding (By similarity). HVR1 is implicated in the SCARB1-mediated cell entry and probably acts as a regulator of the association of particles with lipids (By similarity).</text>
</comment>
<comment type="domain">
    <molecule>Protease NS2</molecule>
    <text evidence="4">The N-terminus of NS3 is required for the catalytic activity of protease NS2 (By similarity). The minimal catalytic region includes the C-terminus of NS2 and the N-terminus NS3 protease domain (active region NS2-3) (By similarity).</text>
</comment>
<comment type="PTM">
    <molecule>Genome polyprotein</molecule>
    <text evidence="5 6">Specific enzymatic cleavages in vivo yield mature proteins (By similarity). The structural proteins, core, E1, E2 and p7 are produced by proteolytic processing by host signal peptidases (By similarity). The core protein precursor is synthesized as a 23 kDa, which is retained in the ER membrane through the hydrophobic signal peptide (By similarity). Cleavage by the signal peptidase releases the 21 kDa mature core protein (By similarity). The cleavage of the core protein precursor occurs between aminoacids 176 and 188 but the exact cleavage site is not known (By similarity). Some degraded forms of the core protein appear as well during the course of infection (By similarity). The other proteins (p7, NS2, NS3, NS4A, NS4B, NS5A and NS5B) are cleaved by the viral proteases (By similarity). Autoprocessing between NS2 and NS3 is mediated by the NS2 cysteine protease catalytic domain and regulated by the NS3 N-terminal domain (By similarity).</text>
</comment>
<comment type="PTM">
    <molecule>Mature core protein</molecule>
    <text evidence="8">Phosphorylated by host PKC and PKA.</text>
</comment>
<comment type="PTM">
    <molecule>Mature core protein</molecule>
    <text evidence="9">Ubiquitinated; mediated by UBE3A and leading to core protein subsequent proteasomal degradation.</text>
</comment>
<comment type="PTM">
    <molecule>Envelope glycoprotein E1</molecule>
    <text evidence="6">Highly N-glycosylated.</text>
</comment>
<comment type="PTM">
    <molecule>Envelope glycoprotein E2</molecule>
    <text evidence="6">Highly N-glycosylated.</text>
</comment>
<comment type="PTM">
    <molecule>Protease NS2</molecule>
    <text evidence="6">Palmitoylation is required for NS2/3 autoprocessing and E2 recruitment to membranes.</text>
</comment>
<comment type="miscellaneous">
    <text evidence="17">Viral particle assembly takes place at the surface of ER-derived membranes in close proximity to lipid droplets. NS2 associates with E1/E2 glycoproteins, NS3 and NS5A, which interacts with the viral RNA and core protein to promote genome encapsidation. The nucleocapsid buds at the ER membrane where E1/E2 glycoproteins are anchored and afterward associate with nascent lipid droplet to acquire APOE and APOC. Secretion of viral particles is probably regulated by viroporin p7.</text>
</comment>
<comment type="miscellaneous">
    <molecule>Mature core protein</molecule>
    <text evidence="3">Exerts viral interference on hepatitis B virus when HCV and HBV coinfect the same cell, by suppressing HBV gene expression, RNA encapsidation and budding.</text>
</comment>
<comment type="similarity">
    <text evidence="17">Belongs to the hepacivirus polyprotein family.</text>
</comment>
<comment type="caution">
    <text evidence="17">The core gene probably also codes for alternative reading frame proteins (ARFPs). Many functions depicted for the core protein might belong to the ARFPs.</text>
</comment>
<accession>Q5EG65</accession>
<protein>
    <recommendedName>
        <fullName>Genome polyprotein</fullName>
    </recommendedName>
    <component>
        <recommendedName>
            <fullName>Core protein precursor</fullName>
        </recommendedName>
        <alternativeName>
            <fullName>Capsid protein C</fullName>
        </alternativeName>
        <alternativeName>
            <fullName>p23</fullName>
        </alternativeName>
    </component>
    <component>
        <recommendedName>
            <fullName>Mature core protein</fullName>
        </recommendedName>
        <alternativeName>
            <fullName>p21</fullName>
        </alternativeName>
    </component>
    <component>
        <recommendedName>
            <fullName>Envelope glycoprotein E1</fullName>
        </recommendedName>
        <alternativeName>
            <fullName>gp32</fullName>
        </alternativeName>
        <alternativeName>
            <fullName>gp35</fullName>
        </alternativeName>
    </component>
    <component>
        <recommendedName>
            <fullName>Envelope glycoprotein E2</fullName>
        </recommendedName>
        <alternativeName>
            <fullName>NS1</fullName>
        </alternativeName>
        <alternativeName>
            <fullName>gp68</fullName>
        </alternativeName>
        <alternativeName>
            <fullName>gp70</fullName>
        </alternativeName>
    </component>
    <component>
        <recommendedName>
            <fullName>Viroporin p7</fullName>
        </recommendedName>
    </component>
    <component>
        <recommendedName>
            <fullName>Protease NS2</fullName>
            <shortName>p23</shortName>
            <ecNumber evidence="4">3.4.22.-</ecNumber>
        </recommendedName>
        <alternativeName>
            <fullName>Non-structural protein 2</fullName>
            <shortName>NS2</shortName>
        </alternativeName>
    </component>
</protein>
<keyword id="KW-0002">3D-structure</keyword>
<keyword id="KW-0007">Acetylation</keyword>
<keyword id="KW-0053">Apoptosis</keyword>
<keyword id="KW-0167">Capsid protein</keyword>
<keyword id="KW-1165">Clathrin-mediated endocytosis of virus by host</keyword>
<keyword id="KW-1015">Disulfide bond</keyword>
<keyword id="KW-1170">Fusion of virus membrane with host endosomal membrane</keyword>
<keyword id="KW-1168">Fusion of virus membrane with host membrane</keyword>
<keyword id="KW-0325">Glycoprotein</keyword>
<keyword id="KW-1032">Host cell membrane</keyword>
<keyword id="KW-1035">Host cytoplasm</keyword>
<keyword id="KW-1038">Host endoplasmic reticulum</keyword>
<keyword id="KW-1041">Host lipid droplet</keyword>
<keyword id="KW-1043">Host membrane</keyword>
<keyword id="KW-1045">Host mitochondrion</keyword>
<keyword id="KW-1048">Host nucleus</keyword>
<keyword id="KW-0945">Host-virus interaction</keyword>
<keyword id="KW-0378">Hydrolase</keyword>
<keyword id="KW-1090">Inhibition of host innate immune response by virus</keyword>
<keyword id="KW-0922">Interferon antiviral system evasion</keyword>
<keyword id="KW-0407">Ion channel</keyword>
<keyword id="KW-0406">Ion transport</keyword>
<keyword id="KW-1017">Isopeptide bond</keyword>
<keyword id="KW-0460">Magnesium</keyword>
<keyword id="KW-0472">Membrane</keyword>
<keyword id="KW-0553">Oncogene</keyword>
<keyword id="KW-0597">Phosphoprotein</keyword>
<keyword id="KW-0645">Protease</keyword>
<keyword id="KW-0687">Ribonucleoprotein</keyword>
<keyword id="KW-0694">RNA-binding</keyword>
<keyword id="KW-0788">Thiol protease</keyword>
<keyword id="KW-0812">Transmembrane</keyword>
<keyword id="KW-1133">Transmembrane helix</keyword>
<keyword id="KW-0813">Transport</keyword>
<keyword id="KW-0832">Ubl conjugation</keyword>
<keyword id="KW-1161">Viral attachment to host cell</keyword>
<keyword id="KW-0261">Viral envelope protein</keyword>
<keyword id="KW-0899">Viral immunoevasion</keyword>
<keyword id="KW-1182">Viral ion channel</keyword>
<keyword id="KW-0543">Viral nucleoprotein</keyword>
<keyword id="KW-1162">Viral penetration into host cytoplasm</keyword>
<keyword id="KW-0946">Virion</keyword>
<keyword id="KW-1164">Virus endocytosis by host</keyword>
<keyword id="KW-1160">Virus entry into host cell</keyword>
<keyword id="KW-0862">Zinc</keyword>
<proteinExistence type="evidence at protein level"/>
<sequence length="829" mass="90587">MSTNPKPQRKTKRNTNRRPQDVKFPGGGQIVGGVYLLPRRGPRLGVRATRKTSERSQPRGRRQPIPKARRPKGRNWAQPGYPWPLYGNEGCGWAGWLPSPRGSRPSWGPNDPRRRSRNLGKVIDTLTCGFVDLMGYIPLVGAPLRGAARALAHGVRVLEDGVNYATGNLPGCSFSIFLLALLSCLTVPASAYQVRNSTGLYHVTNDCPNSSIVYEAVDAILHTPGCVPCVREGNASRCWVAMTPTVATRDGRLPTTQLRRHIDLLVGSATLCSALYVGDLCGSVFLVGQLFTFSPRRHWTTQGCNCSIYPGHITGHRMAWDMMMNWSPTTALVVAQLLRIPQAILDMIAGAHWGVLAGMAYFSMVGNWAKVLAVLLLFAGVDAETHVTGGAAARSTLQLAGLFQPGAKQNVQLINTNGSWHVNRTALNCNDSLNTGWIAGLFYYHGFNSSGCSERLASCRSLTDFDQGWGPISYAGGGGPDHRPYCWHYPPKPCGIVPAKSVCGPVYCFTPSPVVVGTTDRSGAPTYSWGADDTDVFVLNNTRPPLGNWFGCTWMNSTGFTKVCGAPPCVIGGVGNNTLHCPTDCFRKHPEATYSRCGSGPWLTPRCLVDYPYRLWHYPCTINHSIFKVRMYVGGVEHRLDAACNWTRGERCDLEDRDRSELSPLLLSTTQWQVLPCSFTTLPALSTGLIHLHQNIVDVQYLYGVGSSIASWAIKWEYVVLLFLLLADARVCSCLWMMLLISQAEAALENLVVLNAASLAGTHGLVSFLVFFCFAWFLRGKWVPGAVYALYGMWPLLLLLLALPQRAYALDTEVAASCGGVVLVGLMAL</sequence>
<feature type="initiator methionine" description="Removed; by host" evidence="5">
    <location>
        <position position="1"/>
    </location>
</feature>
<feature type="chain" id="PRO_0000450903" description="Genome polyprotein">
    <location>
        <begin position="2"/>
        <end position="829" status="greater than"/>
    </location>
</feature>
<feature type="chain" id="PRO_0000037559" description="Core protein precursor">
    <location>
        <begin position="2"/>
        <end position="191"/>
    </location>
</feature>
<feature type="chain" id="PRO_0000037560" description="Mature core protein">
    <location>
        <begin position="2"/>
        <end position="177"/>
    </location>
</feature>
<feature type="propeptide" id="PRO_0000037561" description="ER anchor for the core protein, removed in mature form by host signal peptidase">
    <location>
        <begin position="178"/>
        <end position="191"/>
    </location>
</feature>
<feature type="chain" id="PRO_0000037562" description="Envelope glycoprotein E1">
    <location>
        <begin position="192"/>
        <end position="383"/>
    </location>
</feature>
<feature type="chain" id="PRO_0000037563" description="Envelope glycoprotein E2">
    <location>
        <begin position="384"/>
        <end position="746"/>
    </location>
</feature>
<feature type="chain" id="PRO_0000037564" description="Viroporin p7">
    <location>
        <begin position="747"/>
        <end position="809"/>
    </location>
</feature>
<feature type="chain" id="PRO_0000037565" description="Protease NS2">
    <location>
        <begin position="810"/>
        <end position="829" status="greater than"/>
    </location>
</feature>
<feature type="topological domain" description="Cytoplasmic" evidence="13">
    <location>
        <begin position="2"/>
        <end position="168"/>
    </location>
</feature>
<feature type="transmembrane region" description="Helical" evidence="13">
    <location>
        <begin position="169"/>
        <end position="189"/>
    </location>
</feature>
<feature type="topological domain" description="Lumenal" evidence="6">
    <location>
        <begin position="190"/>
        <end position="358"/>
    </location>
</feature>
<feature type="transmembrane region" description="Helical" evidence="6">
    <location>
        <begin position="359"/>
        <end position="379"/>
    </location>
</feature>
<feature type="topological domain" description="Lumenal" evidence="6">
    <location>
        <begin position="380"/>
        <end position="725"/>
    </location>
</feature>
<feature type="transmembrane region" description="Helical" evidence="6">
    <location>
        <begin position="726"/>
        <end position="746"/>
    </location>
</feature>
<feature type="topological domain" description="Lumenal" evidence="6">
    <location>
        <begin position="747"/>
        <end position="757"/>
    </location>
</feature>
<feature type="transmembrane region" description="Helical" evidence="6">
    <location>
        <begin position="758"/>
        <end position="778"/>
    </location>
</feature>
<feature type="topological domain" description="Cytoplasmic" evidence="6">
    <location>
        <begin position="779"/>
        <end position="781"/>
    </location>
</feature>
<feature type="transmembrane region" description="Helical" evidence="6">
    <location>
        <begin position="782"/>
        <end position="803"/>
    </location>
</feature>
<feature type="topological domain" description="Lumenal" evidence="6">
    <location>
        <begin position="804"/>
        <end position="813"/>
    </location>
</feature>
<feature type="transmembrane region" description="Helical" evidence="12">
    <location>
        <begin position="814"/>
        <end position="829" status="greater than"/>
    </location>
</feature>
<feature type="region of interest" description="Disordered" evidence="6">
    <location>
        <begin position="2"/>
        <end position="75"/>
    </location>
</feature>
<feature type="region of interest" description="Interaction with DDX3X" evidence="15">
    <location>
        <begin position="2"/>
        <end position="59"/>
    </location>
</feature>
<feature type="region of interest" description="Interaction with EIF2AK2/PKR" evidence="3">
    <location>
        <begin position="2"/>
        <end position="58"/>
    </location>
</feature>
<feature type="region of interest" description="Interaction with STAT1" evidence="3">
    <location>
        <begin position="2"/>
        <end position="23"/>
    </location>
</feature>
<feature type="region of interest" description="Important for endoplasmic reticulum and mitochondrial localization" evidence="3">
    <location>
        <begin position="112"/>
        <end position="152"/>
    </location>
</feature>
<feature type="region of interest" description="Interaction with APOA2" evidence="7">
    <location>
        <begin position="122"/>
        <end position="173"/>
    </location>
</feature>
<feature type="region of interest" description="Important for lipid droplets localization" evidence="6">
    <location>
        <begin position="164"/>
        <end position="167"/>
    </location>
</feature>
<feature type="region of interest" description="Important for fusion" evidence="6">
    <location>
        <begin position="265"/>
        <end position="296"/>
    </location>
</feature>
<feature type="region of interest" description="HVR1" evidence="6">
    <location>
        <begin position="385"/>
        <end position="411"/>
    </location>
</feature>
<feature type="region of interest" description="HVR2" evidence="6">
    <location>
        <begin position="474"/>
        <end position="479"/>
    </location>
</feature>
<feature type="region of interest" description="CD81-binding 1" evidence="4">
    <location>
        <begin position="480"/>
        <end position="493"/>
    </location>
</feature>
<feature type="region of interest" description="CD81-binding 2" evidence="4">
    <location>
        <begin position="544"/>
        <end position="551"/>
    </location>
</feature>
<feature type="region of interest" description="PKR/eIF2-alpha phosphorylation homology domain (PePHD)" evidence="1">
    <location>
        <begin position="660"/>
        <end position="671"/>
    </location>
</feature>
<feature type="short sequence motif" description="Nuclear localization signal" evidence="11">
    <location>
        <begin position="5"/>
        <end position="13"/>
    </location>
</feature>
<feature type="short sequence motif" description="Nuclear localization signal" evidence="11">
    <location>
        <begin position="38"/>
        <end position="43"/>
    </location>
</feature>
<feature type="short sequence motif" description="Nuclear localization signal" evidence="11">
    <location>
        <begin position="58"/>
        <end position="64"/>
    </location>
</feature>
<feature type="short sequence motif" description="Nuclear localization signal" evidence="11">
    <location>
        <begin position="66"/>
        <end position="71"/>
    </location>
</feature>
<feature type="compositionally biased region" description="Basic residues" evidence="14">
    <location>
        <begin position="7"/>
        <end position="16"/>
    </location>
</feature>
<feature type="compositionally biased region" description="Low complexity" evidence="14">
    <location>
        <begin position="32"/>
        <end position="47"/>
    </location>
</feature>
<feature type="compositionally biased region" description="Basic residues" evidence="14">
    <location>
        <begin position="58"/>
        <end position="73"/>
    </location>
</feature>
<feature type="site" description="Cleavage; by host signal peptide peptidase" evidence="3">
    <location>
        <begin position="177"/>
        <end position="178"/>
    </location>
</feature>
<feature type="site" description="Cleavage; by host signal peptidase" evidence="3">
    <location>
        <begin position="191"/>
        <end position="192"/>
    </location>
</feature>
<feature type="site" description="Cleavage; by host signal peptidase" evidence="3">
    <location>
        <begin position="383"/>
        <end position="384"/>
    </location>
</feature>
<feature type="site" description="Cleavage; by host signal peptidase" evidence="1">
    <location>
        <begin position="746"/>
        <end position="747"/>
    </location>
</feature>
<feature type="site" description="Cleavage; by host signal peptidase" evidence="1">
    <location>
        <begin position="809"/>
        <end position="810"/>
    </location>
</feature>
<feature type="modified residue" description="N-acetylserine; by host" evidence="10">
    <location>
        <position position="2"/>
    </location>
</feature>
<feature type="modified residue" description="Phosphoserine; by host" evidence="8">
    <location>
        <position position="53"/>
    </location>
</feature>
<feature type="modified residue" description="Phosphoserine; by host" evidence="8">
    <location>
        <position position="99"/>
    </location>
</feature>
<feature type="modified residue" description="Phosphoserine; by host PKA" evidence="8">
    <location>
        <position position="116"/>
    </location>
</feature>
<feature type="glycosylation site" description="N-linked (GlcNAc...) asparagine; by host" evidence="6">
    <location>
        <position position="196"/>
    </location>
</feature>
<feature type="glycosylation site" description="N-linked (GlcNAc...) asparagine; by host" evidence="6">
    <location>
        <position position="209"/>
    </location>
</feature>
<feature type="glycosylation site" description="N-linked (GlcNAc...) asparagine; by host" evidence="6">
    <location>
        <position position="234"/>
    </location>
</feature>
<feature type="glycosylation site" description="N-linked (GlcNAc...) asparagine; by host" evidence="13">
    <location>
        <position position="305"/>
    </location>
</feature>
<feature type="glycosylation site" description="N-linked (GlcNAc...) (high mannose) asparagine; by host" evidence="6">
    <location>
        <position position="417"/>
    </location>
</feature>
<feature type="glycosylation site" description="N-linked (GlcNAc...) (high mannose) asparagine; by host" evidence="6">
    <location>
        <position position="423"/>
    </location>
</feature>
<feature type="glycosylation site" description="N-linked (GlcNAc...) (high mannose) asparagine; by host" evidence="6">
    <location>
        <position position="430"/>
    </location>
</feature>
<feature type="glycosylation site" description="N-linked (GlcNAc...) (high mannose) asparagine; by host" evidence="6">
    <location>
        <position position="448"/>
    </location>
</feature>
<feature type="glycosylation site" description="N-linked (GlcNAc...) asparagine; by host" evidence="13">
    <location>
        <position position="540"/>
    </location>
</feature>
<feature type="glycosylation site" description="N-linked (GlcNAc...) (high mannose) asparagine; by host" evidence="6">
    <location>
        <position position="556"/>
    </location>
</feature>
<feature type="glycosylation site" description="N-linked (GlcNAc...) (high mannose) asparagine; by host" evidence="6">
    <location>
        <position position="576"/>
    </location>
</feature>
<feature type="glycosylation site" description="N-linked (GlcNAc...) (high mannose) asparagine; by host" evidence="6">
    <location>
        <position position="623"/>
    </location>
</feature>
<feature type="glycosylation site" description="N-linked (GlcNAc...) (high mannose) asparagine; by host" evidence="6">
    <location>
        <position position="645"/>
    </location>
</feature>
<feature type="disulfide bond" evidence="6">
    <location>
        <begin position="429"/>
        <end position="552"/>
    </location>
</feature>
<feature type="disulfide bond" evidence="6">
    <location>
        <begin position="452"/>
        <end position="459"/>
    </location>
</feature>
<feature type="disulfide bond" evidence="6">
    <location>
        <begin position="486"/>
        <end position="494"/>
    </location>
</feature>
<feature type="disulfide bond" evidence="6">
    <location>
        <begin position="503"/>
        <end position="508"/>
    </location>
</feature>
<feature type="disulfide bond" evidence="6">
    <location>
        <begin position="564"/>
        <end position="569"/>
    </location>
</feature>
<feature type="disulfide bond" evidence="6">
    <location>
        <begin position="581"/>
        <end position="585"/>
    </location>
</feature>
<feature type="disulfide bond" evidence="6">
    <location>
        <begin position="597"/>
        <end position="620"/>
    </location>
</feature>
<feature type="disulfide bond" evidence="6">
    <location>
        <begin position="607"/>
        <end position="644"/>
    </location>
</feature>
<feature type="disulfide bond" evidence="6">
    <location>
        <begin position="652"/>
        <end position="677"/>
    </location>
</feature>
<feature type="mutagenesis site" description="Complete loss of processing." evidence="16">
    <original>ALLSC</original>
    <variation>VLLLV</variation>
    <location>
        <begin position="180"/>
        <end position="184"/>
    </location>
</feature>
<feature type="non-terminal residue">
    <location>
        <position position="829"/>
    </location>
</feature>
<feature type="strand" evidence="18">
    <location>
        <begin position="414"/>
        <end position="416"/>
    </location>
</feature>
<feature type="strand" evidence="18">
    <location>
        <begin position="419"/>
        <end position="421"/>
    </location>
</feature>
<organismHost>
    <name type="scientific">Homo sapiens</name>
    <name type="common">Human</name>
    <dbReference type="NCBI Taxonomy" id="9606"/>
</organismHost>
<name>POLG_HCVGL</name>
<evidence type="ECO:0000250" key="1"/>
<evidence type="ECO:0000250" key="2">
    <source>
        <dbReference type="UniProtKB" id="O92972"/>
    </source>
</evidence>
<evidence type="ECO:0000250" key="3">
    <source>
        <dbReference type="UniProtKB" id="P26662"/>
    </source>
</evidence>
<evidence type="ECO:0000250" key="4">
    <source>
        <dbReference type="UniProtKB" id="P26663"/>
    </source>
</evidence>
<evidence type="ECO:0000250" key="5">
    <source>
        <dbReference type="UniProtKB" id="P26664"/>
    </source>
</evidence>
<evidence type="ECO:0000250" key="6">
    <source>
        <dbReference type="UniProtKB" id="P27958"/>
    </source>
</evidence>
<evidence type="ECO:0000250" key="7">
    <source>
        <dbReference type="UniProtKB" id="P29846"/>
    </source>
</evidence>
<evidence type="ECO:0000250" key="8">
    <source>
        <dbReference type="UniProtKB" id="Q01403"/>
    </source>
</evidence>
<evidence type="ECO:0000250" key="9">
    <source>
        <dbReference type="UniProtKB" id="Q03463"/>
    </source>
</evidence>
<evidence type="ECO:0000250" key="10">
    <source>
        <dbReference type="UniProtKB" id="Q913V3"/>
    </source>
</evidence>
<evidence type="ECO:0000250" key="11">
    <source>
        <dbReference type="UniProtKB" id="Q99IB8"/>
    </source>
</evidence>
<evidence type="ECO:0000250" key="12">
    <source>
        <dbReference type="UniProtKB" id="Q9WMX2"/>
    </source>
</evidence>
<evidence type="ECO:0000255" key="13"/>
<evidence type="ECO:0000256" key="14">
    <source>
        <dbReference type="SAM" id="MobiDB-lite"/>
    </source>
</evidence>
<evidence type="ECO:0000269" key="15">
    <source>
    </source>
</evidence>
<evidence type="ECO:0000269" key="16">
    <source>
    </source>
</evidence>
<evidence type="ECO:0000305" key="17"/>
<evidence type="ECO:0007829" key="18">
    <source>
        <dbReference type="PDB" id="5VXR"/>
    </source>
</evidence>